<accession>Q8FTK6</accession>
<reference key="1">
    <citation type="journal article" date="2003" name="Genome Res.">
        <title>Comparative complete genome sequence analysis of the amino acid replacements responsible for the thermostability of Corynebacterium efficiens.</title>
        <authorList>
            <person name="Nishio Y."/>
            <person name="Nakamura Y."/>
            <person name="Kawarabayasi Y."/>
            <person name="Usuda Y."/>
            <person name="Kimura E."/>
            <person name="Sugimoto S."/>
            <person name="Matsui K."/>
            <person name="Yamagishi A."/>
            <person name="Kikuchi H."/>
            <person name="Ikeo K."/>
            <person name="Gojobori T."/>
        </authorList>
    </citation>
    <scope>NUCLEOTIDE SEQUENCE [LARGE SCALE GENOMIC DNA]</scope>
    <source>
        <strain>DSM 44549 / YS-314 / AJ 12310 / JCM 11189 / NBRC 100395</strain>
    </source>
</reference>
<dbReference type="EC" id="2.7.4.25" evidence="1"/>
<dbReference type="EMBL" id="BA000035">
    <property type="protein sequence ID" value="BAC18370.1"/>
    <property type="status" value="ALT_INIT"/>
    <property type="molecule type" value="Genomic_DNA"/>
</dbReference>
<dbReference type="RefSeq" id="WP_006767558.1">
    <property type="nucleotide sequence ID" value="NZ_GG700683.1"/>
</dbReference>
<dbReference type="SMR" id="Q8FTK6"/>
<dbReference type="STRING" id="196164.gene:10741978"/>
<dbReference type="KEGG" id="cef:CE1560"/>
<dbReference type="eggNOG" id="COG0283">
    <property type="taxonomic scope" value="Bacteria"/>
</dbReference>
<dbReference type="HOGENOM" id="CLU_079959_0_0_11"/>
<dbReference type="OrthoDB" id="9807434at2"/>
<dbReference type="Proteomes" id="UP000001409">
    <property type="component" value="Chromosome"/>
</dbReference>
<dbReference type="GO" id="GO:0005829">
    <property type="term" value="C:cytosol"/>
    <property type="evidence" value="ECO:0007669"/>
    <property type="project" value="TreeGrafter"/>
</dbReference>
<dbReference type="GO" id="GO:0005524">
    <property type="term" value="F:ATP binding"/>
    <property type="evidence" value="ECO:0007669"/>
    <property type="project" value="UniProtKB-UniRule"/>
</dbReference>
<dbReference type="GO" id="GO:0036430">
    <property type="term" value="F:CMP kinase activity"/>
    <property type="evidence" value="ECO:0007669"/>
    <property type="project" value="RHEA"/>
</dbReference>
<dbReference type="GO" id="GO:0036431">
    <property type="term" value="F:dCMP kinase activity"/>
    <property type="evidence" value="ECO:0007669"/>
    <property type="project" value="RHEA"/>
</dbReference>
<dbReference type="GO" id="GO:0015949">
    <property type="term" value="P:nucleobase-containing small molecule interconversion"/>
    <property type="evidence" value="ECO:0007669"/>
    <property type="project" value="TreeGrafter"/>
</dbReference>
<dbReference type="GO" id="GO:0006220">
    <property type="term" value="P:pyrimidine nucleotide metabolic process"/>
    <property type="evidence" value="ECO:0007669"/>
    <property type="project" value="UniProtKB-UniRule"/>
</dbReference>
<dbReference type="CDD" id="cd02020">
    <property type="entry name" value="CMPK"/>
    <property type="match status" value="1"/>
</dbReference>
<dbReference type="Gene3D" id="3.40.50.300">
    <property type="entry name" value="P-loop containing nucleotide triphosphate hydrolases"/>
    <property type="match status" value="1"/>
</dbReference>
<dbReference type="HAMAP" id="MF_00238">
    <property type="entry name" value="Cytidyl_kinase_type1"/>
    <property type="match status" value="1"/>
</dbReference>
<dbReference type="InterPro" id="IPR003136">
    <property type="entry name" value="Cytidylate_kin"/>
</dbReference>
<dbReference type="InterPro" id="IPR011994">
    <property type="entry name" value="Cytidylate_kinase_dom"/>
</dbReference>
<dbReference type="InterPro" id="IPR027417">
    <property type="entry name" value="P-loop_NTPase"/>
</dbReference>
<dbReference type="NCBIfam" id="TIGR00017">
    <property type="entry name" value="cmk"/>
    <property type="match status" value="1"/>
</dbReference>
<dbReference type="PANTHER" id="PTHR21299:SF2">
    <property type="entry name" value="CYTIDYLATE KINASE"/>
    <property type="match status" value="1"/>
</dbReference>
<dbReference type="PANTHER" id="PTHR21299">
    <property type="entry name" value="CYTIDYLATE KINASE/PANTOATE-BETA-ALANINE LIGASE"/>
    <property type="match status" value="1"/>
</dbReference>
<dbReference type="Pfam" id="PF02224">
    <property type="entry name" value="Cytidylate_kin"/>
    <property type="match status" value="1"/>
</dbReference>
<dbReference type="SUPFAM" id="SSF52540">
    <property type="entry name" value="P-loop containing nucleoside triphosphate hydrolases"/>
    <property type="match status" value="1"/>
</dbReference>
<name>KCY_COREF</name>
<gene>
    <name evidence="1" type="primary">cmk</name>
    <name type="ordered locus">CE1560</name>
</gene>
<keyword id="KW-0067">ATP-binding</keyword>
<keyword id="KW-0963">Cytoplasm</keyword>
<keyword id="KW-0418">Kinase</keyword>
<keyword id="KW-0547">Nucleotide-binding</keyword>
<keyword id="KW-1185">Reference proteome</keyword>
<keyword id="KW-0808">Transferase</keyword>
<protein>
    <recommendedName>
        <fullName evidence="1">Cytidylate kinase</fullName>
        <shortName evidence="1">CK</shortName>
        <ecNumber evidence="1">2.7.4.25</ecNumber>
    </recommendedName>
    <alternativeName>
        <fullName evidence="1">Cytidine monophosphate kinase</fullName>
        <shortName evidence="1">CMP kinase</shortName>
    </alternativeName>
</protein>
<evidence type="ECO:0000255" key="1">
    <source>
        <dbReference type="HAMAP-Rule" id="MF_00238"/>
    </source>
</evidence>
<evidence type="ECO:0000305" key="2"/>
<comment type="catalytic activity">
    <reaction evidence="1">
        <text>CMP + ATP = CDP + ADP</text>
        <dbReference type="Rhea" id="RHEA:11600"/>
        <dbReference type="ChEBI" id="CHEBI:30616"/>
        <dbReference type="ChEBI" id="CHEBI:58069"/>
        <dbReference type="ChEBI" id="CHEBI:60377"/>
        <dbReference type="ChEBI" id="CHEBI:456216"/>
        <dbReference type="EC" id="2.7.4.25"/>
    </reaction>
</comment>
<comment type="catalytic activity">
    <reaction evidence="1">
        <text>dCMP + ATP = dCDP + ADP</text>
        <dbReference type="Rhea" id="RHEA:25094"/>
        <dbReference type="ChEBI" id="CHEBI:30616"/>
        <dbReference type="ChEBI" id="CHEBI:57566"/>
        <dbReference type="ChEBI" id="CHEBI:58593"/>
        <dbReference type="ChEBI" id="CHEBI:456216"/>
        <dbReference type="EC" id="2.7.4.25"/>
    </reaction>
</comment>
<comment type="subcellular location">
    <subcellularLocation>
        <location evidence="1">Cytoplasm</location>
    </subcellularLocation>
</comment>
<comment type="similarity">
    <text evidence="1">Belongs to the cytidylate kinase family. Type 1 subfamily.</text>
</comment>
<comment type="sequence caution" evidence="2">
    <conflict type="erroneous initiation">
        <sequence resource="EMBL-CDS" id="BAC18370"/>
    </conflict>
</comment>
<sequence>MPDGGLIIAIDGPSGTGKSTTSRALATRLNAKYLDTGAMYRVATLHVLNQGIDPADTDAVITATAALPLAISDDPSSTEVLLAGVDVQTEIRGPEVTSHVSAVSAIPEVRDNLVNLQRALADRAHRCVVEGRDIGTVVLVDAPVKAYLTASPEVRAQRRYDQDTAAGRAADFDEVLAAVVKRDELDSTRAASPLKPAEDAHIIDTSAMTMDEVLTHLIQLTEASAERSNQ</sequence>
<proteinExistence type="inferred from homology"/>
<organism>
    <name type="scientific">Corynebacterium efficiens (strain DSM 44549 / YS-314 / AJ 12310 / JCM 11189 / NBRC 100395)</name>
    <dbReference type="NCBI Taxonomy" id="196164"/>
    <lineage>
        <taxon>Bacteria</taxon>
        <taxon>Bacillati</taxon>
        <taxon>Actinomycetota</taxon>
        <taxon>Actinomycetes</taxon>
        <taxon>Mycobacteriales</taxon>
        <taxon>Corynebacteriaceae</taxon>
        <taxon>Corynebacterium</taxon>
    </lineage>
</organism>
<feature type="chain" id="PRO_0000131908" description="Cytidylate kinase">
    <location>
        <begin position="1"/>
        <end position="230"/>
    </location>
</feature>
<feature type="binding site" evidence="1">
    <location>
        <begin position="12"/>
        <end position="20"/>
    </location>
    <ligand>
        <name>ATP</name>
        <dbReference type="ChEBI" id="CHEBI:30616"/>
    </ligand>
</feature>